<protein>
    <recommendedName>
        <fullName evidence="1">NADH-quinone oxidoreductase subunit B</fullName>
        <ecNumber evidence="1">7.1.1.-</ecNumber>
    </recommendedName>
    <alternativeName>
        <fullName evidence="1">NADH dehydrogenase I subunit B</fullName>
    </alternativeName>
    <alternativeName>
        <fullName evidence="1">NDH-1 subunit B</fullName>
    </alternativeName>
</protein>
<name>NUOB_NITSB</name>
<accession>A6Q1P4</accession>
<keyword id="KW-0004">4Fe-4S</keyword>
<keyword id="KW-0997">Cell inner membrane</keyword>
<keyword id="KW-1003">Cell membrane</keyword>
<keyword id="KW-0408">Iron</keyword>
<keyword id="KW-0411">Iron-sulfur</keyword>
<keyword id="KW-0472">Membrane</keyword>
<keyword id="KW-0479">Metal-binding</keyword>
<keyword id="KW-0520">NAD</keyword>
<keyword id="KW-0874">Quinone</keyword>
<keyword id="KW-1185">Reference proteome</keyword>
<keyword id="KW-1278">Translocase</keyword>
<keyword id="KW-0813">Transport</keyword>
<keyword id="KW-0830">Ubiquinone</keyword>
<reference key="1">
    <citation type="journal article" date="2007" name="Proc. Natl. Acad. Sci. U.S.A.">
        <title>Deep-sea vent epsilon-proteobacterial genomes provide insights into emergence of pathogens.</title>
        <authorList>
            <person name="Nakagawa S."/>
            <person name="Takaki Y."/>
            <person name="Shimamura S."/>
            <person name="Reysenbach A.-L."/>
            <person name="Takai K."/>
            <person name="Horikoshi K."/>
        </authorList>
    </citation>
    <scope>NUCLEOTIDE SEQUENCE [LARGE SCALE GENOMIC DNA]</scope>
    <source>
        <strain>SB155-2</strain>
    </source>
</reference>
<evidence type="ECO:0000255" key="1">
    <source>
        <dbReference type="HAMAP-Rule" id="MF_01356"/>
    </source>
</evidence>
<gene>
    <name evidence="1" type="primary">nuoB</name>
    <name type="ordered locus">NIS_0289</name>
</gene>
<organism>
    <name type="scientific">Nitratiruptor sp. (strain SB155-2)</name>
    <dbReference type="NCBI Taxonomy" id="387092"/>
    <lineage>
        <taxon>Bacteria</taxon>
        <taxon>Pseudomonadati</taxon>
        <taxon>Campylobacterota</taxon>
        <taxon>Epsilonproteobacteria</taxon>
        <taxon>Nautiliales</taxon>
        <taxon>Nitratiruptoraceae</taxon>
        <taxon>Nitratiruptor</taxon>
    </lineage>
</organism>
<sequence>MAQHQVNYASNAGLPVALTTVDKLVNWGRTNSLWVLTYGLACCAIEMMASGASRYDFDRFGVIFRASPRQSDVMIVAGTLTKKHAEFIRRLYDQMAEPKWVISMGSCANTGGMFNTYATVQGVDRVIPVDIYLPGCAPRPETLQYAVMLLQKKLRKRSIFQKQKPKRLV</sequence>
<dbReference type="EC" id="7.1.1.-" evidence="1"/>
<dbReference type="EMBL" id="AP009178">
    <property type="protein sequence ID" value="BAF69403.1"/>
    <property type="molecule type" value="Genomic_DNA"/>
</dbReference>
<dbReference type="RefSeq" id="WP_012081666.1">
    <property type="nucleotide sequence ID" value="NC_009662.1"/>
</dbReference>
<dbReference type="SMR" id="A6Q1P4"/>
<dbReference type="FunCoup" id="A6Q1P4">
    <property type="interactions" value="290"/>
</dbReference>
<dbReference type="STRING" id="387092.NIS_0289"/>
<dbReference type="KEGG" id="nis:NIS_0289"/>
<dbReference type="eggNOG" id="COG0377">
    <property type="taxonomic scope" value="Bacteria"/>
</dbReference>
<dbReference type="HOGENOM" id="CLU_055737_7_3_7"/>
<dbReference type="InParanoid" id="A6Q1P4"/>
<dbReference type="OrthoDB" id="9786737at2"/>
<dbReference type="Proteomes" id="UP000001118">
    <property type="component" value="Chromosome"/>
</dbReference>
<dbReference type="GO" id="GO:0005886">
    <property type="term" value="C:plasma membrane"/>
    <property type="evidence" value="ECO:0007669"/>
    <property type="project" value="UniProtKB-SubCell"/>
</dbReference>
<dbReference type="GO" id="GO:0045271">
    <property type="term" value="C:respiratory chain complex I"/>
    <property type="evidence" value="ECO:0007669"/>
    <property type="project" value="TreeGrafter"/>
</dbReference>
<dbReference type="GO" id="GO:0051539">
    <property type="term" value="F:4 iron, 4 sulfur cluster binding"/>
    <property type="evidence" value="ECO:0007669"/>
    <property type="project" value="UniProtKB-KW"/>
</dbReference>
<dbReference type="GO" id="GO:0005506">
    <property type="term" value="F:iron ion binding"/>
    <property type="evidence" value="ECO:0007669"/>
    <property type="project" value="UniProtKB-UniRule"/>
</dbReference>
<dbReference type="GO" id="GO:0008137">
    <property type="term" value="F:NADH dehydrogenase (ubiquinone) activity"/>
    <property type="evidence" value="ECO:0007669"/>
    <property type="project" value="InterPro"/>
</dbReference>
<dbReference type="GO" id="GO:0050136">
    <property type="term" value="F:NADH:ubiquinone reductase (non-electrogenic) activity"/>
    <property type="evidence" value="ECO:0007669"/>
    <property type="project" value="UniProtKB-UniRule"/>
</dbReference>
<dbReference type="GO" id="GO:0048038">
    <property type="term" value="F:quinone binding"/>
    <property type="evidence" value="ECO:0007669"/>
    <property type="project" value="UniProtKB-KW"/>
</dbReference>
<dbReference type="GO" id="GO:0009060">
    <property type="term" value="P:aerobic respiration"/>
    <property type="evidence" value="ECO:0007669"/>
    <property type="project" value="TreeGrafter"/>
</dbReference>
<dbReference type="GO" id="GO:0015990">
    <property type="term" value="P:electron transport coupled proton transport"/>
    <property type="evidence" value="ECO:0007669"/>
    <property type="project" value="TreeGrafter"/>
</dbReference>
<dbReference type="FunFam" id="3.40.50.12280:FF:000002">
    <property type="entry name" value="NADH-quinone oxidoreductase subunit B"/>
    <property type="match status" value="1"/>
</dbReference>
<dbReference type="Gene3D" id="3.40.50.12280">
    <property type="match status" value="1"/>
</dbReference>
<dbReference type="HAMAP" id="MF_01356">
    <property type="entry name" value="NDH1_NuoB"/>
    <property type="match status" value="1"/>
</dbReference>
<dbReference type="InterPro" id="IPR006137">
    <property type="entry name" value="NADH_UbQ_OxRdtase-like_20kDa"/>
</dbReference>
<dbReference type="InterPro" id="IPR006138">
    <property type="entry name" value="NADH_UQ_OxRdtase_20Kd_su"/>
</dbReference>
<dbReference type="NCBIfam" id="TIGR01957">
    <property type="entry name" value="nuoB_fam"/>
    <property type="match status" value="1"/>
</dbReference>
<dbReference type="NCBIfam" id="NF005012">
    <property type="entry name" value="PRK06411.1"/>
    <property type="match status" value="1"/>
</dbReference>
<dbReference type="PANTHER" id="PTHR11995">
    <property type="entry name" value="NADH DEHYDROGENASE"/>
    <property type="match status" value="1"/>
</dbReference>
<dbReference type="PANTHER" id="PTHR11995:SF14">
    <property type="entry name" value="NADH DEHYDROGENASE [UBIQUINONE] IRON-SULFUR PROTEIN 7, MITOCHONDRIAL"/>
    <property type="match status" value="1"/>
</dbReference>
<dbReference type="Pfam" id="PF01058">
    <property type="entry name" value="Oxidored_q6"/>
    <property type="match status" value="1"/>
</dbReference>
<dbReference type="SUPFAM" id="SSF56770">
    <property type="entry name" value="HydA/Nqo6-like"/>
    <property type="match status" value="1"/>
</dbReference>
<comment type="function">
    <text evidence="1">NDH-1 shuttles electrons from NADH, via FMN and iron-sulfur (Fe-S) centers, to quinones in the respiratory chain. The immediate electron acceptor for the enzyme in this species is believed to be ubiquinone. Couples the redox reaction to proton translocation (for every two electrons transferred, four hydrogen ions are translocated across the cytoplasmic membrane), and thus conserves the redox energy in a proton gradient.</text>
</comment>
<comment type="catalytic activity">
    <reaction evidence="1">
        <text>a quinone + NADH + 5 H(+)(in) = a quinol + NAD(+) + 4 H(+)(out)</text>
        <dbReference type="Rhea" id="RHEA:57888"/>
        <dbReference type="ChEBI" id="CHEBI:15378"/>
        <dbReference type="ChEBI" id="CHEBI:24646"/>
        <dbReference type="ChEBI" id="CHEBI:57540"/>
        <dbReference type="ChEBI" id="CHEBI:57945"/>
        <dbReference type="ChEBI" id="CHEBI:132124"/>
    </reaction>
</comment>
<comment type="cofactor">
    <cofactor evidence="1">
        <name>[4Fe-4S] cluster</name>
        <dbReference type="ChEBI" id="CHEBI:49883"/>
    </cofactor>
    <text evidence="1">Binds 1 [4Fe-4S] cluster.</text>
</comment>
<comment type="subunit">
    <text evidence="1">NDH-1 is composed of 14 different subunits. Subunits NuoB, C, D, E, F, and G constitute the peripheral sector of the complex.</text>
</comment>
<comment type="subcellular location">
    <subcellularLocation>
        <location evidence="1">Cell inner membrane</location>
        <topology evidence="1">Peripheral membrane protein</topology>
        <orientation evidence="1">Cytoplasmic side</orientation>
    </subcellularLocation>
</comment>
<comment type="similarity">
    <text evidence="1">Belongs to the complex I 20 kDa subunit family.</text>
</comment>
<proteinExistence type="inferred from homology"/>
<feature type="chain" id="PRO_0000376288" description="NADH-quinone oxidoreductase subunit B">
    <location>
        <begin position="1"/>
        <end position="169"/>
    </location>
</feature>
<feature type="binding site" evidence="1">
    <location>
        <position position="42"/>
    </location>
    <ligand>
        <name>[4Fe-4S] cluster</name>
        <dbReference type="ChEBI" id="CHEBI:49883"/>
    </ligand>
</feature>
<feature type="binding site" evidence="1">
    <location>
        <position position="43"/>
    </location>
    <ligand>
        <name>[4Fe-4S] cluster</name>
        <dbReference type="ChEBI" id="CHEBI:49883"/>
    </ligand>
</feature>
<feature type="binding site" evidence="1">
    <location>
        <position position="107"/>
    </location>
    <ligand>
        <name>[4Fe-4S] cluster</name>
        <dbReference type="ChEBI" id="CHEBI:49883"/>
    </ligand>
</feature>
<feature type="binding site" evidence="1">
    <location>
        <position position="136"/>
    </location>
    <ligand>
        <name>[4Fe-4S] cluster</name>
        <dbReference type="ChEBI" id="CHEBI:49883"/>
    </ligand>
</feature>